<comment type="function">
    <text evidence="1">Core subunit of the mitochondrial membrane respiratory chain NADH dehydrogenase (Complex I) that is believed to belong to the minimal assembly required for catalysis. Complex I functions in the transfer of electrons from NADH to the respiratory chain. The immediate electron acceptor for the enzyme is believed to be ubiquinone (By similarity).</text>
</comment>
<comment type="catalytic activity">
    <reaction>
        <text>a ubiquinone + NADH + 5 H(+)(in) = a ubiquinol + NAD(+) + 4 H(+)(out)</text>
        <dbReference type="Rhea" id="RHEA:29091"/>
        <dbReference type="Rhea" id="RHEA-COMP:9565"/>
        <dbReference type="Rhea" id="RHEA-COMP:9566"/>
        <dbReference type="ChEBI" id="CHEBI:15378"/>
        <dbReference type="ChEBI" id="CHEBI:16389"/>
        <dbReference type="ChEBI" id="CHEBI:17976"/>
        <dbReference type="ChEBI" id="CHEBI:57540"/>
        <dbReference type="ChEBI" id="CHEBI:57945"/>
        <dbReference type="EC" id="7.1.1.2"/>
    </reaction>
</comment>
<comment type="subcellular location">
    <subcellularLocation>
        <location>Mitochondrion inner membrane</location>
        <topology>Multi-pass membrane protein</topology>
    </subcellularLocation>
</comment>
<comment type="similarity">
    <text evidence="3">Belongs to the complex I subunit 2 family.</text>
</comment>
<dbReference type="EC" id="7.1.1.2"/>
<dbReference type="EMBL" id="U24570">
    <property type="protein sequence ID" value="AAC46876.1"/>
    <property type="molecule type" value="Genomic_DNA"/>
</dbReference>
<dbReference type="PIR" id="S58997">
    <property type="entry name" value="S58997"/>
</dbReference>
<dbReference type="RefSeq" id="NP_008250.1">
    <property type="nucleotide sequence ID" value="NC_001673.1"/>
</dbReference>
<dbReference type="SMR" id="Q34951"/>
<dbReference type="GeneID" id="807920"/>
<dbReference type="CTD" id="4536"/>
<dbReference type="GO" id="GO:0005743">
    <property type="term" value="C:mitochondrial inner membrane"/>
    <property type="evidence" value="ECO:0007669"/>
    <property type="project" value="UniProtKB-SubCell"/>
</dbReference>
<dbReference type="GO" id="GO:0008137">
    <property type="term" value="F:NADH dehydrogenase (ubiquinone) activity"/>
    <property type="evidence" value="ECO:0007669"/>
    <property type="project" value="UniProtKB-EC"/>
</dbReference>
<dbReference type="GO" id="GO:0006120">
    <property type="term" value="P:mitochondrial electron transport, NADH to ubiquinone"/>
    <property type="evidence" value="ECO:0007669"/>
    <property type="project" value="InterPro"/>
</dbReference>
<dbReference type="InterPro" id="IPR050175">
    <property type="entry name" value="Complex_I_Subunit_2"/>
</dbReference>
<dbReference type="InterPro" id="IPR003917">
    <property type="entry name" value="NADH_UbQ_OxRdtase_chain2"/>
</dbReference>
<dbReference type="InterPro" id="IPR001750">
    <property type="entry name" value="ND/Mrp_TM"/>
</dbReference>
<dbReference type="PANTHER" id="PTHR46552">
    <property type="entry name" value="NADH-UBIQUINONE OXIDOREDUCTASE CHAIN 2"/>
    <property type="match status" value="1"/>
</dbReference>
<dbReference type="PANTHER" id="PTHR46552:SF1">
    <property type="entry name" value="NADH-UBIQUINONE OXIDOREDUCTASE CHAIN 2"/>
    <property type="match status" value="1"/>
</dbReference>
<dbReference type="Pfam" id="PF00361">
    <property type="entry name" value="Proton_antipo_M"/>
    <property type="match status" value="1"/>
</dbReference>
<dbReference type="PRINTS" id="PR01436">
    <property type="entry name" value="NADHDHGNASE2"/>
</dbReference>
<sequence>MKYIKSPTMALAMSTLIMSTLMAVSSANWMFLWGAMELNLLSFIPIMMQSNNNQETEGAVKYFLAQALGSALLLMSSTSMWMTFSMISNFMPLTLMAAIMLKLGSVPCHFWYPSVMASISWVSCLILSSWQKLAPLSILAFLLPQKNMNFMLSMAAMNALLGGVIGMNQTQLRTIMAYSSIGHIGWMMSLAAVYKPSSCIMYFVVYCILITPLFMTMGYLNMFSTKHMSKLSSYSSTVHMALLMVLLSLGGLPPFTGFMPKLMTIMLLMQSMKIILLILIAGSIMNLFFYLNIIISSMPLPPHLKNVDSTDIKCSLKFVIPICTLSLGLSPFIML</sequence>
<proteinExistence type="inferred from homology"/>
<gene>
    <name type="primary">ND2</name>
</gene>
<keyword id="KW-0249">Electron transport</keyword>
<keyword id="KW-0472">Membrane</keyword>
<keyword id="KW-0496">Mitochondrion</keyword>
<keyword id="KW-0999">Mitochondrion inner membrane</keyword>
<keyword id="KW-0520">NAD</keyword>
<keyword id="KW-0679">Respiratory chain</keyword>
<keyword id="KW-1278">Translocase</keyword>
<keyword id="KW-0812">Transmembrane</keyword>
<keyword id="KW-1133">Transmembrane helix</keyword>
<keyword id="KW-0813">Transport</keyword>
<keyword id="KW-0830">Ubiquinone</keyword>
<feature type="chain" id="PRO_0000117603" description="NADH-ubiquinone oxidoreductase chain 2">
    <location>
        <begin position="1"/>
        <end position="335"/>
    </location>
</feature>
<feature type="transmembrane region" description="Helical" evidence="2">
    <location>
        <begin position="7"/>
        <end position="27"/>
    </location>
</feature>
<feature type="transmembrane region" description="Helical" evidence="2">
    <location>
        <begin position="28"/>
        <end position="48"/>
    </location>
</feature>
<feature type="transmembrane region" description="Helical" evidence="2">
    <location>
        <begin position="58"/>
        <end position="78"/>
    </location>
</feature>
<feature type="transmembrane region" description="Helical" evidence="2">
    <location>
        <begin position="81"/>
        <end position="101"/>
    </location>
</feature>
<feature type="transmembrane region" description="Helical" evidence="2">
    <location>
        <begin position="110"/>
        <end position="130"/>
    </location>
</feature>
<feature type="transmembrane region" description="Helical" evidence="2">
    <location>
        <begin position="147"/>
        <end position="167"/>
    </location>
</feature>
<feature type="transmembrane region" description="Helical" evidence="2">
    <location>
        <begin position="174"/>
        <end position="194"/>
    </location>
</feature>
<feature type="transmembrane region" description="Helical" evidence="2">
    <location>
        <begin position="200"/>
        <end position="220"/>
    </location>
</feature>
<feature type="transmembrane region" description="Helical" evidence="2">
    <location>
        <begin position="240"/>
        <end position="260"/>
    </location>
</feature>
<feature type="transmembrane region" description="Helical" evidence="2">
    <location>
        <begin position="274"/>
        <end position="294"/>
    </location>
</feature>
<feature type="transmembrane region" description="Helical" evidence="2">
    <location>
        <begin position="315"/>
        <end position="335"/>
    </location>
</feature>
<accession>Q34951</accession>
<evidence type="ECO:0000250" key="1"/>
<evidence type="ECO:0000255" key="2"/>
<evidence type="ECO:0000305" key="3"/>
<protein>
    <recommendedName>
        <fullName>NADH-ubiquinone oxidoreductase chain 2</fullName>
        <ecNumber>7.1.1.2</ecNumber>
    </recommendedName>
    <alternativeName>
        <fullName>NADH dehydrogenase subunit 2</fullName>
    </alternativeName>
</protein>
<name>NU2M_LUMTE</name>
<geneLocation type="mitochondrion"/>
<reference key="1">
    <citation type="journal article" date="1995" name="Genetics">
        <title>Complete sequence of the mitochondrial DNA of the annelid worm Lumbricus terrestris.</title>
        <authorList>
            <person name="Boore J.L."/>
            <person name="Brown W.M."/>
        </authorList>
    </citation>
    <scope>NUCLEOTIDE SEQUENCE [GENOMIC DNA]</scope>
</reference>
<organism>
    <name type="scientific">Lumbricus terrestris</name>
    <name type="common">Common earthworm</name>
    <dbReference type="NCBI Taxonomy" id="6398"/>
    <lineage>
        <taxon>Eukaryota</taxon>
        <taxon>Metazoa</taxon>
        <taxon>Spiralia</taxon>
        <taxon>Lophotrochozoa</taxon>
        <taxon>Annelida</taxon>
        <taxon>Clitellata</taxon>
        <taxon>Oligochaeta</taxon>
        <taxon>Crassiclitellata</taxon>
        <taxon>Lumbricina</taxon>
        <taxon>Lumbricidae</taxon>
        <taxon>Lumbricinae</taxon>
        <taxon>Lumbricus</taxon>
    </lineage>
</organism>